<comment type="subcellular location">
    <subcellularLocation>
        <location evidence="1">Host cytoplasm</location>
    </subcellularLocation>
</comment>
<organism>
    <name type="scientific">Bacillus phage SPbeta</name>
    <name type="common">Bacillus phage SPBc2</name>
    <name type="synonym">Bacteriophage SP-beta</name>
    <dbReference type="NCBI Taxonomy" id="2932878"/>
    <lineage>
        <taxon>Viruses</taxon>
        <taxon>Duplodnaviria</taxon>
        <taxon>Heunggongvirae</taxon>
        <taxon>Uroviricota</taxon>
        <taxon>Caudoviricetes</taxon>
        <taxon>Spbetavirus</taxon>
        <taxon>Spbetavirus SPbeta</taxon>
    </lineage>
</organism>
<reference key="1">
    <citation type="journal article" date="1999" name="Microbiology">
        <title>Nucleotide sequence of the Bacillus subtilis temperate bacteriophage SPbetac2.</title>
        <authorList>
            <person name="Lazarevic V."/>
            <person name="Duesterhoeft A."/>
            <person name="Soldo B."/>
            <person name="Hilbert H."/>
            <person name="Mauel C."/>
            <person name="Karamata D."/>
        </authorList>
    </citation>
    <scope>NUCLEOTIDE SEQUENCE [LARGE SCALE GENOMIC DNA]</scope>
</reference>
<keyword id="KW-1035">Host cytoplasm</keyword>
<keyword id="KW-1185">Reference proteome</keyword>
<keyword id="KW-0346">Stress response</keyword>
<accession>P68576</accession>
<accession>O64138</accession>
<accession>P81094</accession>
<accession>P81099</accession>
<gene>
    <name type="primary">yorD</name>
    <name type="ordered locus">SPBc2p126</name>
</gene>
<feature type="chain" id="PRO_0000050081" description="Stress response protein SCP1">
    <location>
        <begin position="1"/>
        <end position="104"/>
    </location>
</feature>
<organismHost>
    <name type="scientific">Bacillus pumilus</name>
    <name type="common">Bacillus mesentericus</name>
    <dbReference type="NCBI Taxonomy" id="1408"/>
</organismHost>
<organismHost>
    <name type="scientific">Bacillus subtilis</name>
    <dbReference type="NCBI Taxonomy" id="1423"/>
</organismHost>
<protein>
    <recommendedName>
        <fullName>Stress response protein SCP1</fullName>
    </recommendedName>
</protein>
<proteinExistence type="inferred from homology"/>
<name>SCP1_BPSPB</name>
<sequence>MEFKVGQDVSEIWNIHGSILPEVLMYMFPRSDESYDWEFVNDNGRHIFTAWRKSEPIPTLEEIEKAAIELEEKKNAPKPKTLEERVADLEKQVAYLTSKVEGTN</sequence>
<dbReference type="EMBL" id="AF020713">
    <property type="protein sequence ID" value="AAC13098.1"/>
    <property type="molecule type" value="Genomic_DNA"/>
</dbReference>
<dbReference type="PIR" id="T12889">
    <property type="entry name" value="T12889"/>
</dbReference>
<dbReference type="RefSeq" id="NP_046677.1">
    <property type="nucleotide sequence ID" value="NC_001884.1"/>
</dbReference>
<dbReference type="SMR" id="P68576"/>
<dbReference type="GeneID" id="1261376"/>
<dbReference type="KEGG" id="vg:1261376"/>
<dbReference type="Proteomes" id="UP000009091">
    <property type="component" value="Genome"/>
</dbReference>
<dbReference type="GO" id="GO:0030430">
    <property type="term" value="C:host cell cytoplasm"/>
    <property type="evidence" value="ECO:0007669"/>
    <property type="project" value="UniProtKB-SubCell"/>
</dbReference>
<dbReference type="Gene3D" id="3.30.56.60">
    <property type="entry name" value="XkdW-like"/>
    <property type="match status" value="1"/>
</dbReference>
<dbReference type="InterPro" id="IPR019094">
    <property type="entry name" value="Phage_SP-beta_YorD"/>
</dbReference>
<dbReference type="InterPro" id="IPR035950">
    <property type="entry name" value="XkdW-like_sf"/>
</dbReference>
<dbReference type="Pfam" id="PF09636">
    <property type="entry name" value="XkdW"/>
    <property type="match status" value="1"/>
</dbReference>
<dbReference type="SUPFAM" id="SSF159865">
    <property type="entry name" value="XkdW-like"/>
    <property type="match status" value="1"/>
</dbReference>
<evidence type="ECO:0000250" key="1"/>